<name>KITH_STAAS</name>
<evidence type="ECO:0000255" key="1">
    <source>
        <dbReference type="HAMAP-Rule" id="MF_00124"/>
    </source>
</evidence>
<protein>
    <recommendedName>
        <fullName evidence="1">Thymidine kinase</fullName>
        <ecNumber evidence="1">2.7.1.21</ecNumber>
    </recommendedName>
</protein>
<sequence length="199" mass="22214">MYETYHSGWIECITGSMFSGKSEELIRRLRRGIYAKQKVVVFKPAIDDRYHKEKVVSHNGNAIEAINISKASEIMTHDLTNVDVIGIDEVQFFDDEIVSIVEKLSADGHRVIVAGLDMDFRGEPFEPMPKLMAVSEQVTKLQAVCAVCGSSSSRTQRLINGKPAKIDDPIILVGANESYEPRCRAHHIVAPSDNNKEEL</sequence>
<accession>Q6G7J1</accession>
<keyword id="KW-0067">ATP-binding</keyword>
<keyword id="KW-0963">Cytoplasm</keyword>
<keyword id="KW-0237">DNA synthesis</keyword>
<keyword id="KW-0418">Kinase</keyword>
<keyword id="KW-0479">Metal-binding</keyword>
<keyword id="KW-0547">Nucleotide-binding</keyword>
<keyword id="KW-0808">Transferase</keyword>
<keyword id="KW-0862">Zinc</keyword>
<organism>
    <name type="scientific">Staphylococcus aureus (strain MSSA476)</name>
    <dbReference type="NCBI Taxonomy" id="282459"/>
    <lineage>
        <taxon>Bacteria</taxon>
        <taxon>Bacillati</taxon>
        <taxon>Bacillota</taxon>
        <taxon>Bacilli</taxon>
        <taxon>Bacillales</taxon>
        <taxon>Staphylococcaceae</taxon>
        <taxon>Staphylococcus</taxon>
    </lineage>
</organism>
<feature type="chain" id="PRO_0000175022" description="Thymidine kinase">
    <location>
        <begin position="1"/>
        <end position="199"/>
    </location>
</feature>
<feature type="active site" description="Proton acceptor" evidence="1">
    <location>
        <position position="89"/>
    </location>
</feature>
<feature type="binding site" evidence="1">
    <location>
        <begin position="15"/>
        <end position="22"/>
    </location>
    <ligand>
        <name>ATP</name>
        <dbReference type="ChEBI" id="CHEBI:30616"/>
    </ligand>
</feature>
<feature type="binding site" evidence="1">
    <location>
        <begin position="88"/>
        <end position="91"/>
    </location>
    <ligand>
        <name>ATP</name>
        <dbReference type="ChEBI" id="CHEBI:30616"/>
    </ligand>
</feature>
<feature type="binding site" evidence="1">
    <location>
        <position position="145"/>
    </location>
    <ligand>
        <name>Zn(2+)</name>
        <dbReference type="ChEBI" id="CHEBI:29105"/>
    </ligand>
</feature>
<feature type="binding site" evidence="1">
    <location>
        <position position="148"/>
    </location>
    <ligand>
        <name>Zn(2+)</name>
        <dbReference type="ChEBI" id="CHEBI:29105"/>
    </ligand>
</feature>
<feature type="binding site" evidence="1">
    <location>
        <position position="183"/>
    </location>
    <ligand>
        <name>Zn(2+)</name>
        <dbReference type="ChEBI" id="CHEBI:29105"/>
    </ligand>
</feature>
<feature type="binding site" evidence="1">
    <location>
        <position position="186"/>
    </location>
    <ligand>
        <name>Zn(2+)</name>
        <dbReference type="ChEBI" id="CHEBI:29105"/>
    </ligand>
</feature>
<reference key="1">
    <citation type="journal article" date="2004" name="Proc. Natl. Acad. Sci. U.S.A.">
        <title>Complete genomes of two clinical Staphylococcus aureus strains: evidence for the rapid evolution of virulence and drug resistance.</title>
        <authorList>
            <person name="Holden M.T.G."/>
            <person name="Feil E.J."/>
            <person name="Lindsay J.A."/>
            <person name="Peacock S.J."/>
            <person name="Day N.P.J."/>
            <person name="Enright M.C."/>
            <person name="Foster T.J."/>
            <person name="Moore C.E."/>
            <person name="Hurst L."/>
            <person name="Atkin R."/>
            <person name="Barron A."/>
            <person name="Bason N."/>
            <person name="Bentley S.D."/>
            <person name="Chillingworth C."/>
            <person name="Chillingworth T."/>
            <person name="Churcher C."/>
            <person name="Clark L."/>
            <person name="Corton C."/>
            <person name="Cronin A."/>
            <person name="Doggett J."/>
            <person name="Dowd L."/>
            <person name="Feltwell T."/>
            <person name="Hance Z."/>
            <person name="Harris B."/>
            <person name="Hauser H."/>
            <person name="Holroyd S."/>
            <person name="Jagels K."/>
            <person name="James K.D."/>
            <person name="Lennard N."/>
            <person name="Line A."/>
            <person name="Mayes R."/>
            <person name="Moule S."/>
            <person name="Mungall K."/>
            <person name="Ormond D."/>
            <person name="Quail M.A."/>
            <person name="Rabbinowitsch E."/>
            <person name="Rutherford K.M."/>
            <person name="Sanders M."/>
            <person name="Sharp S."/>
            <person name="Simmonds M."/>
            <person name="Stevens K."/>
            <person name="Whitehead S."/>
            <person name="Barrell B.G."/>
            <person name="Spratt B.G."/>
            <person name="Parkhill J."/>
        </authorList>
    </citation>
    <scope>NUCLEOTIDE SEQUENCE [LARGE SCALE GENOMIC DNA]</scope>
    <source>
        <strain>MSSA476</strain>
    </source>
</reference>
<comment type="catalytic activity">
    <reaction evidence="1">
        <text>thymidine + ATP = dTMP + ADP + H(+)</text>
        <dbReference type="Rhea" id="RHEA:19129"/>
        <dbReference type="ChEBI" id="CHEBI:15378"/>
        <dbReference type="ChEBI" id="CHEBI:17748"/>
        <dbReference type="ChEBI" id="CHEBI:30616"/>
        <dbReference type="ChEBI" id="CHEBI:63528"/>
        <dbReference type="ChEBI" id="CHEBI:456216"/>
        <dbReference type="EC" id="2.7.1.21"/>
    </reaction>
</comment>
<comment type="subunit">
    <text evidence="1">Homotetramer.</text>
</comment>
<comment type="subcellular location">
    <subcellularLocation>
        <location evidence="1">Cytoplasm</location>
    </subcellularLocation>
</comment>
<comment type="similarity">
    <text evidence="1">Belongs to the thymidine kinase family.</text>
</comment>
<dbReference type="EC" id="2.7.1.21" evidence="1"/>
<dbReference type="EMBL" id="BX571857">
    <property type="protein sequence ID" value="CAG43830.1"/>
    <property type="molecule type" value="Genomic_DNA"/>
</dbReference>
<dbReference type="RefSeq" id="WP_000273356.1">
    <property type="nucleotide sequence ID" value="NC_002953.3"/>
</dbReference>
<dbReference type="SMR" id="Q6G7J1"/>
<dbReference type="KEGG" id="sas:SAS2022"/>
<dbReference type="HOGENOM" id="CLU_064400_3_0_9"/>
<dbReference type="GO" id="GO:0005829">
    <property type="term" value="C:cytosol"/>
    <property type="evidence" value="ECO:0007669"/>
    <property type="project" value="TreeGrafter"/>
</dbReference>
<dbReference type="GO" id="GO:0005524">
    <property type="term" value="F:ATP binding"/>
    <property type="evidence" value="ECO:0007669"/>
    <property type="project" value="UniProtKB-UniRule"/>
</dbReference>
<dbReference type="GO" id="GO:0004797">
    <property type="term" value="F:thymidine kinase activity"/>
    <property type="evidence" value="ECO:0007669"/>
    <property type="project" value="UniProtKB-UniRule"/>
</dbReference>
<dbReference type="GO" id="GO:0008270">
    <property type="term" value="F:zinc ion binding"/>
    <property type="evidence" value="ECO:0007669"/>
    <property type="project" value="UniProtKB-UniRule"/>
</dbReference>
<dbReference type="GO" id="GO:0071897">
    <property type="term" value="P:DNA biosynthetic process"/>
    <property type="evidence" value="ECO:0007669"/>
    <property type="project" value="UniProtKB-KW"/>
</dbReference>
<dbReference type="GO" id="GO:0046104">
    <property type="term" value="P:thymidine metabolic process"/>
    <property type="evidence" value="ECO:0007669"/>
    <property type="project" value="TreeGrafter"/>
</dbReference>
<dbReference type="FunFam" id="3.30.60.20:FF:000026">
    <property type="entry name" value="Thymidine kinase"/>
    <property type="match status" value="1"/>
</dbReference>
<dbReference type="FunFam" id="3.40.50.300:FF:000384">
    <property type="entry name" value="Thymidine kinase"/>
    <property type="match status" value="1"/>
</dbReference>
<dbReference type="Gene3D" id="3.30.60.20">
    <property type="match status" value="1"/>
</dbReference>
<dbReference type="Gene3D" id="3.40.50.300">
    <property type="entry name" value="P-loop containing nucleotide triphosphate hydrolases"/>
    <property type="match status" value="1"/>
</dbReference>
<dbReference type="HAMAP" id="MF_00124">
    <property type="entry name" value="Thymidine_kinase"/>
    <property type="match status" value="1"/>
</dbReference>
<dbReference type="InterPro" id="IPR027417">
    <property type="entry name" value="P-loop_NTPase"/>
</dbReference>
<dbReference type="InterPro" id="IPR001267">
    <property type="entry name" value="Thymidine_kinase"/>
</dbReference>
<dbReference type="InterPro" id="IPR020633">
    <property type="entry name" value="Thymidine_kinase_CS"/>
</dbReference>
<dbReference type="NCBIfam" id="NF003296">
    <property type="entry name" value="PRK04296.1-1"/>
    <property type="match status" value="1"/>
</dbReference>
<dbReference type="PANTHER" id="PTHR11441">
    <property type="entry name" value="THYMIDINE KINASE"/>
    <property type="match status" value="1"/>
</dbReference>
<dbReference type="PANTHER" id="PTHR11441:SF0">
    <property type="entry name" value="THYMIDINE KINASE, CYTOSOLIC"/>
    <property type="match status" value="1"/>
</dbReference>
<dbReference type="Pfam" id="PF00265">
    <property type="entry name" value="TK"/>
    <property type="match status" value="1"/>
</dbReference>
<dbReference type="PIRSF" id="PIRSF035805">
    <property type="entry name" value="TK_cell"/>
    <property type="match status" value="1"/>
</dbReference>
<dbReference type="SUPFAM" id="SSF57716">
    <property type="entry name" value="Glucocorticoid receptor-like (DNA-binding domain)"/>
    <property type="match status" value="1"/>
</dbReference>
<dbReference type="SUPFAM" id="SSF52540">
    <property type="entry name" value="P-loop containing nucleoside triphosphate hydrolases"/>
    <property type="match status" value="1"/>
</dbReference>
<dbReference type="PROSITE" id="PS00603">
    <property type="entry name" value="TK_CELLULAR_TYPE"/>
    <property type="match status" value="1"/>
</dbReference>
<proteinExistence type="inferred from homology"/>
<gene>
    <name evidence="1" type="primary">tdk</name>
    <name type="ordered locus">SAS2022</name>
</gene>